<accession>P53177</accession>
<accession>D6VU90</accession>
<comment type="function">
    <text evidence="3">S-adenosyl-L-methionine-dependent methyltransferase that acts as a component of the wybutosine biosynthesis pathway. Wybutosine is a hyper modified guanosine with a tricyclic base found at the 3'-position adjacent to the anticodon of eukaryotic phenylalanine tRNA. Probably methylates N-4 position of wybutosine-86 to produce wybutosine-72.</text>
</comment>
<comment type="catalytic activity">
    <reaction evidence="3">
        <text>4-demethyl-7-[(3S)-3-amino-3-carboxypropyl]wyosine(37) in tRNA(Phe) + S-adenosyl-L-methionine = 7-[(3S)-3-amino-3-carboxypropyl]wyosine(37) in tRNA(Phe) + S-adenosyl-L-homocysteine + H(+)</text>
        <dbReference type="Rhea" id="RHEA:36635"/>
        <dbReference type="Rhea" id="RHEA-COMP:10378"/>
        <dbReference type="Rhea" id="RHEA-COMP:10379"/>
        <dbReference type="ChEBI" id="CHEBI:15378"/>
        <dbReference type="ChEBI" id="CHEBI:57856"/>
        <dbReference type="ChEBI" id="CHEBI:59789"/>
        <dbReference type="ChEBI" id="CHEBI:73543"/>
        <dbReference type="ChEBI" id="CHEBI:73550"/>
        <dbReference type="EC" id="2.1.1.282"/>
    </reaction>
</comment>
<comment type="pathway">
    <text evidence="3">tRNA modification; wybutosine-tRNA(Phe) biosynthesis.</text>
</comment>
<comment type="miscellaneous">
    <text evidence="2">Present with 3390 molecules/cell in log phase SD medium.</text>
</comment>
<comment type="similarity">
    <text evidence="4">Belongs to the TYW3 family.</text>
</comment>
<gene>
    <name type="primary">TYW3</name>
    <name type="ordered locus">YGL050W</name>
</gene>
<organism>
    <name type="scientific">Saccharomyces cerevisiae (strain ATCC 204508 / S288c)</name>
    <name type="common">Baker's yeast</name>
    <dbReference type="NCBI Taxonomy" id="559292"/>
    <lineage>
        <taxon>Eukaryota</taxon>
        <taxon>Fungi</taxon>
        <taxon>Dikarya</taxon>
        <taxon>Ascomycota</taxon>
        <taxon>Saccharomycotina</taxon>
        <taxon>Saccharomycetes</taxon>
        <taxon>Saccharomycetales</taxon>
        <taxon>Saccharomycetaceae</taxon>
        <taxon>Saccharomyces</taxon>
    </lineage>
</organism>
<feature type="chain" id="PRO_0000202769" description="tRNA wybutosine-synthesizing protein 3">
    <location>
        <begin position="1"/>
        <end position="273"/>
    </location>
</feature>
<feature type="region of interest" description="Disordered" evidence="1">
    <location>
        <begin position="243"/>
        <end position="273"/>
    </location>
</feature>
<feature type="compositionally biased region" description="Basic and acidic residues" evidence="1">
    <location>
        <begin position="246"/>
        <end position="264"/>
    </location>
</feature>
<feature type="modified residue" description="Phosphoserine" evidence="5">
    <location>
        <position position="26"/>
    </location>
</feature>
<feature type="modified residue" description="Phosphoserine" evidence="6">
    <location>
        <position position="238"/>
    </location>
</feature>
<dbReference type="EC" id="2.1.1.282"/>
<dbReference type="EMBL" id="Z72572">
    <property type="protein sequence ID" value="CAA96752.1"/>
    <property type="molecule type" value="Genomic_DNA"/>
</dbReference>
<dbReference type="EMBL" id="BK006941">
    <property type="protein sequence ID" value="DAA08051.1"/>
    <property type="molecule type" value="Genomic_DNA"/>
</dbReference>
<dbReference type="PIR" id="S64054">
    <property type="entry name" value="S64054"/>
</dbReference>
<dbReference type="RefSeq" id="NP_011465.3">
    <property type="nucleotide sequence ID" value="NM_001180915.3"/>
</dbReference>
<dbReference type="SMR" id="P53177"/>
<dbReference type="BioGRID" id="33198">
    <property type="interactions" value="100"/>
</dbReference>
<dbReference type="DIP" id="DIP-2849N"/>
<dbReference type="FunCoup" id="P53177">
    <property type="interactions" value="74"/>
</dbReference>
<dbReference type="IntAct" id="P53177">
    <property type="interactions" value="1"/>
</dbReference>
<dbReference type="MINT" id="P53177"/>
<dbReference type="STRING" id="4932.YGL050W"/>
<dbReference type="iPTMnet" id="P53177"/>
<dbReference type="PaxDb" id="4932-YGL050W"/>
<dbReference type="PeptideAtlas" id="P53177"/>
<dbReference type="EnsemblFungi" id="YGL050W_mRNA">
    <property type="protein sequence ID" value="YGL050W"/>
    <property type="gene ID" value="YGL050W"/>
</dbReference>
<dbReference type="GeneID" id="852832"/>
<dbReference type="KEGG" id="sce:YGL050W"/>
<dbReference type="AGR" id="SGD:S000003018"/>
<dbReference type="SGD" id="S000003018">
    <property type="gene designation" value="TYW3"/>
</dbReference>
<dbReference type="VEuPathDB" id="FungiDB:YGL050W"/>
<dbReference type="eggNOG" id="KOG1228">
    <property type="taxonomic scope" value="Eukaryota"/>
</dbReference>
<dbReference type="GeneTree" id="ENSGT00940000153304"/>
<dbReference type="HOGENOM" id="CLU_047426_0_0_1"/>
<dbReference type="InParanoid" id="P53177"/>
<dbReference type="OMA" id="TWLYVSH"/>
<dbReference type="OrthoDB" id="263283at2759"/>
<dbReference type="BioCyc" id="MetaCyc:G3O-30560-MONOMER"/>
<dbReference type="BioCyc" id="YEAST:G3O-30560-MONOMER"/>
<dbReference type="BRENDA" id="2.1.1.282">
    <property type="organism ID" value="984"/>
</dbReference>
<dbReference type="UniPathway" id="UPA00375"/>
<dbReference type="BioGRID-ORCS" id="852832">
    <property type="hits" value="3 hits in 10 CRISPR screens"/>
</dbReference>
<dbReference type="PRO" id="PR:P53177"/>
<dbReference type="Proteomes" id="UP000002311">
    <property type="component" value="Chromosome VII"/>
</dbReference>
<dbReference type="RNAct" id="P53177">
    <property type="molecule type" value="protein"/>
</dbReference>
<dbReference type="GO" id="GO:0005737">
    <property type="term" value="C:cytoplasm"/>
    <property type="evidence" value="ECO:0000318"/>
    <property type="project" value="GO_Central"/>
</dbReference>
<dbReference type="GO" id="GO:0008175">
    <property type="term" value="F:tRNA methyltransferase activity"/>
    <property type="evidence" value="ECO:0000314"/>
    <property type="project" value="SGD"/>
</dbReference>
<dbReference type="GO" id="GO:0030488">
    <property type="term" value="P:tRNA methylation"/>
    <property type="evidence" value="ECO:0000314"/>
    <property type="project" value="SGD"/>
</dbReference>
<dbReference type="GO" id="GO:0006400">
    <property type="term" value="P:tRNA modification"/>
    <property type="evidence" value="ECO:0000304"/>
    <property type="project" value="Reactome"/>
</dbReference>
<dbReference type="GO" id="GO:0031591">
    <property type="term" value="P:wybutosine biosynthetic process"/>
    <property type="evidence" value="ECO:0000315"/>
    <property type="project" value="SGD"/>
</dbReference>
<dbReference type="FunFam" id="3.30.1960.10:FF:000003">
    <property type="entry name" value="tRNA methyltransferase"/>
    <property type="match status" value="1"/>
</dbReference>
<dbReference type="Gene3D" id="3.30.1960.10">
    <property type="entry name" value="tRNA wybutosine-synthesizing-like"/>
    <property type="match status" value="1"/>
</dbReference>
<dbReference type="InterPro" id="IPR003827">
    <property type="entry name" value="tRNA_yW-synthesising"/>
</dbReference>
<dbReference type="InterPro" id="IPR036602">
    <property type="entry name" value="tRNA_yW-synthesising-like_sf"/>
</dbReference>
<dbReference type="PANTHER" id="PTHR48418">
    <property type="entry name" value="TRNA WYBUTOSINE-SYNTHESIZING PROTEIN 3"/>
    <property type="match status" value="1"/>
</dbReference>
<dbReference type="PANTHER" id="PTHR48418:SF1">
    <property type="entry name" value="TRNA WYBUTOSINE-SYNTHESIZING PROTEIN 3"/>
    <property type="match status" value="1"/>
</dbReference>
<dbReference type="Pfam" id="PF02676">
    <property type="entry name" value="TYW3"/>
    <property type="match status" value="1"/>
</dbReference>
<dbReference type="SUPFAM" id="SSF111278">
    <property type="entry name" value="SSo0622-like"/>
    <property type="match status" value="1"/>
</dbReference>
<reference key="1">
    <citation type="journal article" date="1997" name="Yeast">
        <title>The characterization of two new clusters of duplicated genes suggests a 'Lego' organization of the yeast Saccharomyces cerevisiae chromosomes.</title>
        <authorList>
            <person name="Feuermann M."/>
            <person name="de Montigny J."/>
            <person name="Potier S."/>
            <person name="Souciet J.-L."/>
        </authorList>
    </citation>
    <scope>NUCLEOTIDE SEQUENCE [GENOMIC DNA]</scope>
    <source>
        <strain>ATCC 204508 / S288c</strain>
    </source>
</reference>
<reference key="2">
    <citation type="journal article" date="1997" name="Nature">
        <title>The nucleotide sequence of Saccharomyces cerevisiae chromosome VII.</title>
        <authorList>
            <person name="Tettelin H."/>
            <person name="Agostoni-Carbone M.L."/>
            <person name="Albermann K."/>
            <person name="Albers M."/>
            <person name="Arroyo J."/>
            <person name="Backes U."/>
            <person name="Barreiros T."/>
            <person name="Bertani I."/>
            <person name="Bjourson A.J."/>
            <person name="Brueckner M."/>
            <person name="Bruschi C.V."/>
            <person name="Carignani G."/>
            <person name="Castagnoli L."/>
            <person name="Cerdan E."/>
            <person name="Clemente M.L."/>
            <person name="Coblenz A."/>
            <person name="Coglievina M."/>
            <person name="Coissac E."/>
            <person name="Defoor E."/>
            <person name="Del Bino S."/>
            <person name="Delius H."/>
            <person name="Delneri D."/>
            <person name="de Wergifosse P."/>
            <person name="Dujon B."/>
            <person name="Durand P."/>
            <person name="Entian K.-D."/>
            <person name="Eraso P."/>
            <person name="Escribano V."/>
            <person name="Fabiani L."/>
            <person name="Fartmann B."/>
            <person name="Feroli F."/>
            <person name="Feuermann M."/>
            <person name="Frontali L."/>
            <person name="Garcia-Gonzalez M."/>
            <person name="Garcia-Saez M.I."/>
            <person name="Goffeau A."/>
            <person name="Guerreiro P."/>
            <person name="Hani J."/>
            <person name="Hansen M."/>
            <person name="Hebling U."/>
            <person name="Hernandez K."/>
            <person name="Heumann K."/>
            <person name="Hilger F."/>
            <person name="Hofmann B."/>
            <person name="Indge K.J."/>
            <person name="James C.M."/>
            <person name="Klima R."/>
            <person name="Koetter P."/>
            <person name="Kramer B."/>
            <person name="Kramer W."/>
            <person name="Lauquin G."/>
            <person name="Leuther H."/>
            <person name="Louis E.J."/>
            <person name="Maillier E."/>
            <person name="Marconi A."/>
            <person name="Martegani E."/>
            <person name="Mazon M.J."/>
            <person name="Mazzoni C."/>
            <person name="McReynolds A.D.K."/>
            <person name="Melchioretto P."/>
            <person name="Mewes H.-W."/>
            <person name="Minenkova O."/>
            <person name="Mueller-Auer S."/>
            <person name="Nawrocki A."/>
            <person name="Netter P."/>
            <person name="Neu R."/>
            <person name="Nombela C."/>
            <person name="Oliver S.G."/>
            <person name="Panzeri L."/>
            <person name="Paoluzi S."/>
            <person name="Plevani P."/>
            <person name="Portetelle D."/>
            <person name="Portillo F."/>
            <person name="Potier S."/>
            <person name="Purnelle B."/>
            <person name="Rieger M."/>
            <person name="Riles L."/>
            <person name="Rinaldi T."/>
            <person name="Robben J."/>
            <person name="Rodrigues-Pousada C."/>
            <person name="Rodriguez-Belmonte E."/>
            <person name="Rodriguez-Torres A.M."/>
            <person name="Rose M."/>
            <person name="Ruzzi M."/>
            <person name="Saliola M."/>
            <person name="Sanchez-Perez M."/>
            <person name="Schaefer B."/>
            <person name="Schaefer M."/>
            <person name="Scharfe M."/>
            <person name="Schmidheini T."/>
            <person name="Schreer A."/>
            <person name="Skala J."/>
            <person name="Souciet J.-L."/>
            <person name="Steensma H.Y."/>
            <person name="Talla E."/>
            <person name="Thierry A."/>
            <person name="Vandenbol M."/>
            <person name="van der Aart Q.J.M."/>
            <person name="Van Dyck L."/>
            <person name="Vanoni M."/>
            <person name="Verhasselt P."/>
            <person name="Voet M."/>
            <person name="Volckaert G."/>
            <person name="Wambutt R."/>
            <person name="Watson M.D."/>
            <person name="Weber N."/>
            <person name="Wedler E."/>
            <person name="Wedler H."/>
            <person name="Wipfli P."/>
            <person name="Wolf K."/>
            <person name="Wright L.F."/>
            <person name="Zaccaria P."/>
            <person name="Zimmermann M."/>
            <person name="Zollner A."/>
            <person name="Kleine K."/>
        </authorList>
    </citation>
    <scope>NUCLEOTIDE SEQUENCE [LARGE SCALE GENOMIC DNA]</scope>
    <source>
        <strain>ATCC 204508 / S288c</strain>
    </source>
</reference>
<reference key="3">
    <citation type="journal article" date="2014" name="G3 (Bethesda)">
        <title>The reference genome sequence of Saccharomyces cerevisiae: Then and now.</title>
        <authorList>
            <person name="Engel S.R."/>
            <person name="Dietrich F.S."/>
            <person name="Fisk D.G."/>
            <person name="Binkley G."/>
            <person name="Balakrishnan R."/>
            <person name="Costanzo M.C."/>
            <person name="Dwight S.S."/>
            <person name="Hitz B.C."/>
            <person name="Karra K."/>
            <person name="Nash R.S."/>
            <person name="Weng S."/>
            <person name="Wong E.D."/>
            <person name="Lloyd P."/>
            <person name="Skrzypek M.S."/>
            <person name="Miyasato S.R."/>
            <person name="Simison M."/>
            <person name="Cherry J.M."/>
        </authorList>
    </citation>
    <scope>GENOME REANNOTATION</scope>
    <source>
        <strain>ATCC 204508 / S288c</strain>
    </source>
</reference>
<reference key="4">
    <citation type="journal article" date="2003" name="Nature">
        <title>Global analysis of protein expression in yeast.</title>
        <authorList>
            <person name="Ghaemmaghami S."/>
            <person name="Huh W.-K."/>
            <person name="Bower K."/>
            <person name="Howson R.W."/>
            <person name="Belle A."/>
            <person name="Dephoure N."/>
            <person name="O'Shea E.K."/>
            <person name="Weissman J.S."/>
        </authorList>
    </citation>
    <scope>LEVEL OF PROTEIN EXPRESSION [LARGE SCALE ANALYSIS]</scope>
</reference>
<reference key="5">
    <citation type="journal article" date="2006" name="EMBO J.">
        <title>Biosynthesis of wybutosine, a hyper-modified nucleoside in eukaryotic phenylalanine tRNA.</title>
        <authorList>
            <person name="Noma A."/>
            <person name="Kirino Y."/>
            <person name="Ikeuchi Y."/>
            <person name="Suzuki T."/>
        </authorList>
    </citation>
    <scope>FUNCTION</scope>
    <scope>CATALYTIC ACTIVITY</scope>
    <scope>PATHWAY</scope>
</reference>
<reference key="6">
    <citation type="journal article" date="2008" name="Mol. Cell. Proteomics">
        <title>A multidimensional chromatography technology for in-depth phosphoproteome analysis.</title>
        <authorList>
            <person name="Albuquerque C.P."/>
            <person name="Smolka M.B."/>
            <person name="Payne S.H."/>
            <person name="Bafna V."/>
            <person name="Eng J."/>
            <person name="Zhou H."/>
        </authorList>
    </citation>
    <scope>PHOSPHORYLATION [LARGE SCALE ANALYSIS] AT SER-26</scope>
    <scope>IDENTIFICATION BY MASS SPECTROMETRY [LARGE SCALE ANALYSIS]</scope>
</reference>
<reference key="7">
    <citation type="journal article" date="2009" name="Science">
        <title>Global analysis of Cdk1 substrate phosphorylation sites provides insights into evolution.</title>
        <authorList>
            <person name="Holt L.J."/>
            <person name="Tuch B.B."/>
            <person name="Villen J."/>
            <person name="Johnson A.D."/>
            <person name="Gygi S.P."/>
            <person name="Morgan D.O."/>
        </authorList>
    </citation>
    <scope>PHOSPHORYLATION [LARGE SCALE ANALYSIS] AT SER-238</scope>
    <scope>IDENTIFICATION BY MASS SPECTROMETRY [LARGE SCALE ANALYSIS]</scope>
</reference>
<reference key="8">
    <citation type="journal article" date="2012" name="Proc. Natl. Acad. Sci. U.S.A.">
        <title>N-terminal acetylome analyses and functional insights of the N-terminal acetyltransferase NatB.</title>
        <authorList>
            <person name="Van Damme P."/>
            <person name="Lasa M."/>
            <person name="Polevoda B."/>
            <person name="Gazquez C."/>
            <person name="Elosegui-Artola A."/>
            <person name="Kim D.S."/>
            <person name="De Juan-Pardo E."/>
            <person name="Demeyer K."/>
            <person name="Hole K."/>
            <person name="Larrea E."/>
            <person name="Timmerman E."/>
            <person name="Prieto J."/>
            <person name="Arnesen T."/>
            <person name="Sherman F."/>
            <person name="Gevaert K."/>
            <person name="Aldabe R."/>
        </authorList>
    </citation>
    <scope>IDENTIFICATION BY MASS SPECTROMETRY [LARGE SCALE ANALYSIS]</scope>
</reference>
<proteinExistence type="evidence at protein level"/>
<evidence type="ECO:0000256" key="1">
    <source>
        <dbReference type="SAM" id="MobiDB-lite"/>
    </source>
</evidence>
<evidence type="ECO:0000269" key="2">
    <source>
    </source>
</evidence>
<evidence type="ECO:0000269" key="3">
    <source>
    </source>
</evidence>
<evidence type="ECO:0000305" key="4"/>
<evidence type="ECO:0007744" key="5">
    <source>
    </source>
</evidence>
<evidence type="ECO:0007744" key="6">
    <source>
    </source>
</evidence>
<name>TYW3_YEAST</name>
<keyword id="KW-0489">Methyltransferase</keyword>
<keyword id="KW-0597">Phosphoprotein</keyword>
<keyword id="KW-1185">Reference proteome</keyword>
<keyword id="KW-0949">S-adenosyl-L-methionine</keyword>
<keyword id="KW-0808">Transferase</keyword>
<keyword id="KW-0819">tRNA processing</keyword>
<protein>
    <recommendedName>
        <fullName>tRNA wybutosine-synthesizing protein 3</fullName>
        <shortName>tRNA-yW-synthesizing protein 3</shortName>
        <ecNumber>2.1.1.282</ecNumber>
    </recommendedName>
    <alternativeName>
        <fullName>tRNA(Phe) 7-((3-amino-3-carboxypropyl)-4-demethylwyosine(37)-N(4))-methyltransferase</fullName>
    </alternativeName>
</protein>
<sequence>MAAQNAFEQKKRAILNEIDSTQPDLSPKGTIDELCLPIIDLINASADMVTTSSCSGRVSVFLEGTKSYNGEVKIGGKGQGGKWLYVTHDREKVIGWLDELKSKSEFSFELSGKEIPTEKVTGSIRYILYKYEPFILHVKCRDFQAASKLYNTAMSCGFRESGIGSNNLVAIRINIKLDVPLGYLDETSGTLKFFVTPEYVSVLDSLSLSKFDENTRKMQALYDRIEKELINCAPDVNSKVNITPIETKEERRERKKREGMERQRQLKSPQNVL</sequence>